<accession>Q8EAL4</accession>
<evidence type="ECO:0000305" key="1"/>
<evidence type="ECO:0007829" key="2">
    <source>
        <dbReference type="PDB" id="2K49"/>
    </source>
</evidence>
<feature type="chain" id="PRO_0000218146" description="UPF0339 protein SO_3888">
    <location>
        <begin position="1"/>
        <end position="110"/>
    </location>
</feature>
<feature type="repeat" description="1">
    <location>
        <begin position="10"/>
        <end position="58"/>
    </location>
</feature>
<feature type="repeat" description="2">
    <location>
        <begin position="61"/>
        <end position="109"/>
    </location>
</feature>
<feature type="strand" evidence="2">
    <location>
        <begin position="4"/>
        <end position="9"/>
    </location>
</feature>
<feature type="strand" evidence="2">
    <location>
        <begin position="15"/>
        <end position="20"/>
    </location>
</feature>
<feature type="strand" evidence="2">
    <location>
        <begin position="22"/>
        <end position="24"/>
    </location>
</feature>
<feature type="strand" evidence="2">
    <location>
        <begin position="26"/>
        <end position="29"/>
    </location>
</feature>
<feature type="strand" evidence="2">
    <location>
        <begin position="33"/>
        <end position="35"/>
    </location>
</feature>
<feature type="helix" evidence="2">
    <location>
        <begin position="36"/>
        <end position="49"/>
    </location>
</feature>
<feature type="helix" evidence="2">
    <location>
        <begin position="53"/>
        <end position="55"/>
    </location>
</feature>
<feature type="strand" evidence="2">
    <location>
        <begin position="56"/>
        <end position="61"/>
    </location>
</feature>
<feature type="turn" evidence="2">
    <location>
        <begin position="62"/>
        <end position="64"/>
    </location>
</feature>
<feature type="strand" evidence="2">
    <location>
        <begin position="65"/>
        <end position="71"/>
    </location>
</feature>
<feature type="strand" evidence="2">
    <location>
        <begin position="77"/>
        <end position="81"/>
    </location>
</feature>
<feature type="helix" evidence="2">
    <location>
        <begin position="87"/>
        <end position="100"/>
    </location>
</feature>
<feature type="strand" evidence="2">
    <location>
        <begin position="106"/>
        <end position="108"/>
    </location>
</feature>
<comment type="similarity">
    <text evidence="1">Belongs to the UPF0339 family. Duplicated subfamily.</text>
</comment>
<name>Y3888_SHEON</name>
<organism>
    <name type="scientific">Shewanella oneidensis (strain ATCC 700550 / JCM 31522 / CIP 106686 / LMG 19005 / NCIMB 14063 / MR-1)</name>
    <dbReference type="NCBI Taxonomy" id="211586"/>
    <lineage>
        <taxon>Bacteria</taxon>
        <taxon>Pseudomonadati</taxon>
        <taxon>Pseudomonadota</taxon>
        <taxon>Gammaproteobacteria</taxon>
        <taxon>Alteromonadales</taxon>
        <taxon>Shewanellaceae</taxon>
        <taxon>Shewanella</taxon>
    </lineage>
</organism>
<dbReference type="EMBL" id="AE014299">
    <property type="protein sequence ID" value="AAN56863.1"/>
    <property type="molecule type" value="Genomic_DNA"/>
</dbReference>
<dbReference type="RefSeq" id="NP_719419.1">
    <property type="nucleotide sequence ID" value="NC_004347.2"/>
</dbReference>
<dbReference type="RefSeq" id="WP_011073636.1">
    <property type="nucleotide sequence ID" value="NZ_CP053946.1"/>
</dbReference>
<dbReference type="PDB" id="2K49">
    <property type="method" value="NMR"/>
    <property type="chains" value="A=1-110"/>
</dbReference>
<dbReference type="PDBsum" id="2K49"/>
<dbReference type="BMRB" id="Q8EAL4"/>
<dbReference type="SMR" id="Q8EAL4"/>
<dbReference type="STRING" id="211586.SO_3888"/>
<dbReference type="PaxDb" id="211586-SO_3888"/>
<dbReference type="KEGG" id="son:SO_3888"/>
<dbReference type="PATRIC" id="fig|211586.12.peg.3774"/>
<dbReference type="eggNOG" id="COG3422">
    <property type="taxonomic scope" value="Bacteria"/>
</dbReference>
<dbReference type="HOGENOM" id="CLU_163886_0_0_6"/>
<dbReference type="OrthoDB" id="9802792at2"/>
<dbReference type="PhylomeDB" id="Q8EAL4"/>
<dbReference type="BioCyc" id="SONE211586:G1GMP-3607-MONOMER"/>
<dbReference type="EvolutionaryTrace" id="Q8EAL4"/>
<dbReference type="Proteomes" id="UP000008186">
    <property type="component" value="Chromosome"/>
</dbReference>
<dbReference type="Gene3D" id="2.30.29.80">
    <property type="match status" value="1"/>
</dbReference>
<dbReference type="InterPro" id="IPR010879">
    <property type="entry name" value="DUF1508"/>
</dbReference>
<dbReference type="InterPro" id="IPR051141">
    <property type="entry name" value="UPF0339_domain"/>
</dbReference>
<dbReference type="InterPro" id="IPR036913">
    <property type="entry name" value="YegP-like_sf"/>
</dbReference>
<dbReference type="PANTHER" id="PTHR40606">
    <property type="match status" value="1"/>
</dbReference>
<dbReference type="PANTHER" id="PTHR40606:SF1">
    <property type="entry name" value="UPF0339 PROTEIN YEGP"/>
    <property type="match status" value="1"/>
</dbReference>
<dbReference type="Pfam" id="PF07411">
    <property type="entry name" value="DUF1508"/>
    <property type="match status" value="2"/>
</dbReference>
<dbReference type="SUPFAM" id="SSF160113">
    <property type="entry name" value="YegP-like"/>
    <property type="match status" value="2"/>
</dbReference>
<sequence length="110" mass="12018">MSGWYELSKSSNDQFKFVLKAGNGEVILTSELYTGKSGAMNGIESVQTNSPIEARYAKEVAKNDKPYFNLKAANHQIIGTSQMYSSTAARDNGIKSVMENGKTTTIKDLT</sequence>
<reference key="1">
    <citation type="journal article" date="2002" name="Nat. Biotechnol.">
        <title>Genome sequence of the dissimilatory metal ion-reducing bacterium Shewanella oneidensis.</title>
        <authorList>
            <person name="Heidelberg J.F."/>
            <person name="Paulsen I.T."/>
            <person name="Nelson K.E."/>
            <person name="Gaidos E.J."/>
            <person name="Nelson W.C."/>
            <person name="Read T.D."/>
            <person name="Eisen J.A."/>
            <person name="Seshadri R."/>
            <person name="Ward N.L."/>
            <person name="Methe B.A."/>
            <person name="Clayton R.A."/>
            <person name="Meyer T."/>
            <person name="Tsapin A."/>
            <person name="Scott J."/>
            <person name="Beanan M.J."/>
            <person name="Brinkac L.M."/>
            <person name="Daugherty S.C."/>
            <person name="DeBoy R.T."/>
            <person name="Dodson R.J."/>
            <person name="Durkin A.S."/>
            <person name="Haft D.H."/>
            <person name="Kolonay J.F."/>
            <person name="Madupu R."/>
            <person name="Peterson J.D."/>
            <person name="Umayam L.A."/>
            <person name="White O."/>
            <person name="Wolf A.M."/>
            <person name="Vamathevan J.J."/>
            <person name="Weidman J.F."/>
            <person name="Impraim M."/>
            <person name="Lee K."/>
            <person name="Berry K.J."/>
            <person name="Lee C."/>
            <person name="Mueller J."/>
            <person name="Khouri H.M."/>
            <person name="Gill J."/>
            <person name="Utterback T.R."/>
            <person name="McDonald L.A."/>
            <person name="Feldblyum T.V."/>
            <person name="Smith H.O."/>
            <person name="Venter J.C."/>
            <person name="Nealson K.H."/>
            <person name="Fraser C.M."/>
        </authorList>
    </citation>
    <scope>NUCLEOTIDE SEQUENCE [LARGE SCALE GENOMIC DNA]</scope>
    <source>
        <strain>ATCC 700550 / JCM 31522 / CIP 106686 / LMG 19005 / NCIMB 14063 / MR-1</strain>
    </source>
</reference>
<gene>
    <name type="ordered locus">SO_3888</name>
</gene>
<protein>
    <recommendedName>
        <fullName>UPF0339 protein SO_3888</fullName>
    </recommendedName>
</protein>
<keyword id="KW-0002">3D-structure</keyword>
<keyword id="KW-1185">Reference proteome</keyword>
<keyword id="KW-0677">Repeat</keyword>
<proteinExistence type="evidence at protein level"/>